<accession>B3MET8</accession>
<proteinExistence type="inferred from homology"/>
<dbReference type="EMBL" id="CH902619">
    <property type="protein sequence ID" value="EDV35552.1"/>
    <property type="molecule type" value="Genomic_DNA"/>
</dbReference>
<dbReference type="SMR" id="B3MET8"/>
<dbReference type="FunCoup" id="B3MET8">
    <property type="interactions" value="3176"/>
</dbReference>
<dbReference type="STRING" id="7217.B3MET8"/>
<dbReference type="EnsemblMetazoa" id="FBtr0117120">
    <property type="protein sequence ID" value="FBpp0115612"/>
    <property type="gene ID" value="FBgn0089457"/>
</dbReference>
<dbReference type="EnsemblMetazoa" id="XM_001958694.4">
    <property type="protein sequence ID" value="XP_001958730.2"/>
    <property type="gene ID" value="LOC6495270"/>
</dbReference>
<dbReference type="GeneID" id="6495270"/>
<dbReference type="KEGG" id="dan:6495270"/>
<dbReference type="eggNOG" id="KOG0308">
    <property type="taxonomic scope" value="Eukaryota"/>
</dbReference>
<dbReference type="HOGENOM" id="CLU_014960_0_1_1"/>
<dbReference type="InParanoid" id="B3MET8"/>
<dbReference type="OMA" id="IRHYHIL"/>
<dbReference type="OrthoDB" id="2421129at2759"/>
<dbReference type="PhylomeDB" id="B3MET8"/>
<dbReference type="Proteomes" id="UP000007801">
    <property type="component" value="Unassembled WGS sequence"/>
</dbReference>
<dbReference type="GO" id="GO:0043130">
    <property type="term" value="F:ubiquitin binding"/>
    <property type="evidence" value="ECO:0007669"/>
    <property type="project" value="TreeGrafter"/>
</dbReference>
<dbReference type="GO" id="GO:0000724">
    <property type="term" value="P:double-strand break repair via homologous recombination"/>
    <property type="evidence" value="ECO:0007669"/>
    <property type="project" value="TreeGrafter"/>
</dbReference>
<dbReference type="CDD" id="cd17041">
    <property type="entry name" value="Ubl_WDR48"/>
    <property type="match status" value="1"/>
</dbReference>
<dbReference type="CDD" id="cd00200">
    <property type="entry name" value="WD40"/>
    <property type="match status" value="1"/>
</dbReference>
<dbReference type="FunFam" id="2.130.10.10:FF:000543">
    <property type="entry name" value="WD repeat-containing protein 48 homolog"/>
    <property type="match status" value="1"/>
</dbReference>
<dbReference type="FunFam" id="2.130.10.10:FF:000984">
    <property type="entry name" value="WD repeat-containing protein 48 homolog"/>
    <property type="match status" value="1"/>
</dbReference>
<dbReference type="Gene3D" id="2.130.10.10">
    <property type="entry name" value="YVTN repeat-like/Quinoprotein amine dehydrogenase"/>
    <property type="match status" value="2"/>
</dbReference>
<dbReference type="InterPro" id="IPR020472">
    <property type="entry name" value="G-protein_beta_WD-40_rep"/>
</dbReference>
<dbReference type="InterPro" id="IPR015943">
    <property type="entry name" value="WD40/YVTN_repeat-like_dom_sf"/>
</dbReference>
<dbReference type="InterPro" id="IPR019775">
    <property type="entry name" value="WD40_repeat_CS"/>
</dbReference>
<dbReference type="InterPro" id="IPR036322">
    <property type="entry name" value="WD40_repeat_dom_sf"/>
</dbReference>
<dbReference type="InterPro" id="IPR001680">
    <property type="entry name" value="WD40_rpt"/>
</dbReference>
<dbReference type="InterPro" id="IPR051246">
    <property type="entry name" value="WDR48"/>
</dbReference>
<dbReference type="InterPro" id="IPR021772">
    <property type="entry name" value="WDR48/Bun107"/>
</dbReference>
<dbReference type="PANTHER" id="PTHR19862">
    <property type="entry name" value="WD REPEAT-CONTAINING PROTEIN 48"/>
    <property type="match status" value="1"/>
</dbReference>
<dbReference type="PANTHER" id="PTHR19862:SF14">
    <property type="entry name" value="WD REPEAT-CONTAINING PROTEIN 48"/>
    <property type="match status" value="1"/>
</dbReference>
<dbReference type="Pfam" id="PF11816">
    <property type="entry name" value="DUF3337"/>
    <property type="match status" value="1"/>
</dbReference>
<dbReference type="Pfam" id="PF00400">
    <property type="entry name" value="WD40"/>
    <property type="match status" value="6"/>
</dbReference>
<dbReference type="PRINTS" id="PR00320">
    <property type="entry name" value="GPROTEINBRPT"/>
</dbReference>
<dbReference type="SMART" id="SM00320">
    <property type="entry name" value="WD40"/>
    <property type="match status" value="8"/>
</dbReference>
<dbReference type="SUPFAM" id="SSF50978">
    <property type="entry name" value="WD40 repeat-like"/>
    <property type="match status" value="1"/>
</dbReference>
<dbReference type="PROSITE" id="PS00678">
    <property type="entry name" value="WD_REPEATS_1"/>
    <property type="match status" value="4"/>
</dbReference>
<dbReference type="PROSITE" id="PS50082">
    <property type="entry name" value="WD_REPEATS_2"/>
    <property type="match status" value="5"/>
</dbReference>
<dbReference type="PROSITE" id="PS50294">
    <property type="entry name" value="WD_REPEATS_REGION"/>
    <property type="match status" value="5"/>
</dbReference>
<evidence type="ECO:0000250" key="1"/>
<evidence type="ECO:0000250" key="2">
    <source>
        <dbReference type="UniProtKB" id="Q1LZ08"/>
    </source>
</evidence>
<evidence type="ECO:0000250" key="3">
    <source>
        <dbReference type="UniProtKB" id="Q8TAF3"/>
    </source>
</evidence>
<evidence type="ECO:0000255" key="4"/>
<evidence type="ECO:0000256" key="5">
    <source>
        <dbReference type="SAM" id="MobiDB-lite"/>
    </source>
</evidence>
<evidence type="ECO:0000305" key="6"/>
<evidence type="ECO:0000312" key="7">
    <source>
        <dbReference type="Proteomes" id="UP000007801"/>
    </source>
</evidence>
<organism evidence="7">
    <name type="scientific">Drosophila ananassae</name>
    <name type="common">Fruit fly</name>
    <dbReference type="NCBI Taxonomy" id="7217"/>
    <lineage>
        <taxon>Eukaryota</taxon>
        <taxon>Metazoa</taxon>
        <taxon>Ecdysozoa</taxon>
        <taxon>Arthropoda</taxon>
        <taxon>Hexapoda</taxon>
        <taxon>Insecta</taxon>
        <taxon>Pterygota</taxon>
        <taxon>Neoptera</taxon>
        <taxon>Endopterygota</taxon>
        <taxon>Diptera</taxon>
        <taxon>Brachycera</taxon>
        <taxon>Muscomorpha</taxon>
        <taxon>Ephydroidea</taxon>
        <taxon>Drosophilidae</taxon>
        <taxon>Drosophila</taxon>
        <taxon>Sophophora</taxon>
    </lineage>
</organism>
<gene>
    <name evidence="2" type="primary">Uaf1</name>
    <name type="ORF">GF12420</name>
</gene>
<name>WDR48_DROAN</name>
<sequence length="667" mass="75209">MLTHKTCQARKKMQVSFVIRDAEEKQHRNGVNALQLDANNGKLYSAGRDAIIRVWNTRTESNEKYIQSMEHHNDWVNDIVLCCNGRNLISASCDTTVKVWNAQKGFCMSTLRTHRDYVQALAYAKDREQVASAGLDKAIFLWDVNTLTALTASNNTVTTSSLTGSKDSIYSLAMNPSGTVIVSGSTENILRIWDPRTCMRSMKLRGHTENVRCLVVSPDGNQVVSGSSDGTIKVWNLGQQRCVQTIHVHKEGVWSLLMSENFQYIISGSRDRNIIVTEMRNPSNKMLVCEEQAPVLSLGYNIDKTGVWATTWNSDIRCWKLPMYDRCTLNSSGGLDAQWTQGGTELACIKGGAAIKECTVLNDKRYIITKDSQDQVVVYDVLRVVKKEQLGAVDYEAEVKKRNKQVYIPNWFTVDLKTGMPTIVLGQEEVDCFAAWVSIEAGLPECVDPTTEIKINYGKLLLEALLEHWTPHNMPPNDMDQDMHGNGYFQVPKHTPVIFSEVGGRTVCRLLVRDAAGDSESTLLQETAPQWVTDVVIEKNIPKFLKIPFFLQPHPQMTKPERTKKDRLVANEFIQCRKVCEHVLEKVLNAETTPSGGNANNSLQNSQSDANSEGSQLPAEERIELWCNDVVVDPNMDLRTVRHFIWKQSTDLTFQYKTKQNFNYDGK</sequence>
<comment type="function">
    <text evidence="1 2 3">Regulatory component of the Usp12-46 deubiquitylase complex (By similarity). activates deubiquitination by increasing the catalytic turnover without increasing the affinity of deubiquitinating enzymes for the substrate (By similarity). The complex deubiquitylates the wg/wingless-signaling receptor arr/arrow, which stabilizes the receptor and increases its concentration at the cell surface; this enhances the sensitivity of cells to wg/wingless-signal stimulation. This increases the amplitude and spatial range of the signaling response to the wg/wingless morphogen gradient, facilitating the precise concentration-dependent regulation of its target genes. Together with Wdr20 and Usp12-46 required for wg/wingless-mediated signaling in the wing imaginal disc and for wg/wingless-dependent regulation of intestinal stem cell proliferation (By similarity).</text>
</comment>
<comment type="subunit">
    <text evidence="2">Catalytic component of the Usp12-46 deubiquitylase complex consisting of Usp12-46, Wdr20 and Uaf1; regulatory subunit that, together wtih Wdr20, stabilizes Usp12-46. The Usp12-46 deubiquitylase complex associates with arr/arrow; the interaction leads to deubiquitination and stabilization of arr/arrow.</text>
</comment>
<comment type="similarity">
    <text evidence="6">Belongs to the WD repeat WDR48 family.</text>
</comment>
<protein>
    <recommendedName>
        <fullName>WD repeat-containing protein 48 homolog</fullName>
    </recommendedName>
</protein>
<keyword id="KW-1185">Reference proteome</keyword>
<keyword id="KW-0677">Repeat</keyword>
<keyword id="KW-0833">Ubl conjugation pathway</keyword>
<keyword id="KW-0853">WD repeat</keyword>
<reference key="1">
    <citation type="journal article" date="2007" name="Nature">
        <title>Evolution of genes and genomes on the Drosophila phylogeny.</title>
        <authorList>
            <consortium name="Drosophila 12 genomes consortium"/>
        </authorList>
    </citation>
    <scope>NUCLEOTIDE SEQUENCE [LARGE SCALE GENOMIC DNA]</scope>
    <source>
        <strain>Tucson 14024-0371.13</strain>
    </source>
</reference>
<feature type="chain" id="PRO_0000378978" description="WD repeat-containing protein 48 homolog">
    <location>
        <begin position="1"/>
        <end position="667"/>
    </location>
</feature>
<feature type="repeat" description="WD 1" evidence="4">
    <location>
        <begin position="26"/>
        <end position="65"/>
    </location>
</feature>
<feature type="repeat" description="WD 2" evidence="4">
    <location>
        <begin position="71"/>
        <end position="110"/>
    </location>
</feature>
<feature type="repeat" description="WD 3" evidence="4">
    <location>
        <begin position="113"/>
        <end position="152"/>
    </location>
</feature>
<feature type="repeat" description="WD 4" evidence="4">
    <location>
        <begin position="164"/>
        <end position="203"/>
    </location>
</feature>
<feature type="repeat" description="WD 5" evidence="4">
    <location>
        <begin position="206"/>
        <end position="245"/>
    </location>
</feature>
<feature type="repeat" description="WD 6" evidence="4">
    <location>
        <begin position="248"/>
        <end position="287"/>
    </location>
</feature>
<feature type="repeat" description="WD 7" evidence="4">
    <location>
        <begin position="290"/>
        <end position="329"/>
    </location>
</feature>
<feature type="repeat" description="WD 8" evidence="4">
    <location>
        <begin position="350"/>
        <end position="389"/>
    </location>
</feature>
<feature type="region of interest" description="Disordered" evidence="5">
    <location>
        <begin position="591"/>
        <end position="615"/>
    </location>
</feature>